<protein>
    <recommendedName>
        <fullName evidence="1">Sulfate adenylyltransferase subunit 2</fullName>
        <ecNumber evidence="1">2.7.7.4</ecNumber>
    </recommendedName>
    <alternativeName>
        <fullName evidence="1">ATP-sulfurylase small subunit</fullName>
    </alternativeName>
    <alternativeName>
        <fullName evidence="1">Sulfate adenylate transferase</fullName>
        <shortName evidence="1">SAT</shortName>
    </alternativeName>
</protein>
<gene>
    <name evidence="1" type="primary">cysD</name>
    <name type="ordered locus">PBPRA3311</name>
</gene>
<evidence type="ECO:0000255" key="1">
    <source>
        <dbReference type="HAMAP-Rule" id="MF_00064"/>
    </source>
</evidence>
<evidence type="ECO:0000256" key="2">
    <source>
        <dbReference type="SAM" id="MobiDB-lite"/>
    </source>
</evidence>
<evidence type="ECO:0000305" key="3"/>
<dbReference type="EC" id="2.7.7.4" evidence="1"/>
<dbReference type="EMBL" id="CR378673">
    <property type="protein sequence ID" value="CAG21609.1"/>
    <property type="status" value="ALT_INIT"/>
    <property type="molecule type" value="Genomic_DNA"/>
</dbReference>
<dbReference type="RefSeq" id="WP_041394548.1">
    <property type="nucleotide sequence ID" value="NC_006370.1"/>
</dbReference>
<dbReference type="SMR" id="Q6LM68"/>
<dbReference type="STRING" id="298386.PBPRA3311"/>
<dbReference type="KEGG" id="ppr:PBPRA3311"/>
<dbReference type="eggNOG" id="COG0175">
    <property type="taxonomic scope" value="Bacteria"/>
</dbReference>
<dbReference type="HOGENOM" id="CLU_043026_0_0_6"/>
<dbReference type="UniPathway" id="UPA00140">
    <property type="reaction ID" value="UER00204"/>
</dbReference>
<dbReference type="Proteomes" id="UP000000593">
    <property type="component" value="Chromosome 1"/>
</dbReference>
<dbReference type="GO" id="GO:0005524">
    <property type="term" value="F:ATP binding"/>
    <property type="evidence" value="ECO:0007669"/>
    <property type="project" value="UniProtKB-KW"/>
</dbReference>
<dbReference type="GO" id="GO:0004781">
    <property type="term" value="F:sulfate adenylyltransferase (ATP) activity"/>
    <property type="evidence" value="ECO:0007669"/>
    <property type="project" value="UniProtKB-UniRule"/>
</dbReference>
<dbReference type="GO" id="GO:0070814">
    <property type="term" value="P:hydrogen sulfide biosynthetic process"/>
    <property type="evidence" value="ECO:0007669"/>
    <property type="project" value="UniProtKB-UniRule"/>
</dbReference>
<dbReference type="GO" id="GO:0000103">
    <property type="term" value="P:sulfate assimilation"/>
    <property type="evidence" value="ECO:0007669"/>
    <property type="project" value="UniProtKB-UniRule"/>
</dbReference>
<dbReference type="CDD" id="cd23946">
    <property type="entry name" value="Sulfate_adenylyltransferase_2"/>
    <property type="match status" value="1"/>
</dbReference>
<dbReference type="FunFam" id="3.40.50.620:FF:000002">
    <property type="entry name" value="Sulfate adenylyltransferase subunit 2"/>
    <property type="match status" value="1"/>
</dbReference>
<dbReference type="Gene3D" id="3.40.50.620">
    <property type="entry name" value="HUPs"/>
    <property type="match status" value="1"/>
</dbReference>
<dbReference type="HAMAP" id="MF_00064">
    <property type="entry name" value="Sulf_adenylyltr_sub2"/>
    <property type="match status" value="1"/>
</dbReference>
<dbReference type="InterPro" id="IPR002500">
    <property type="entry name" value="PAPS_reduct_dom"/>
</dbReference>
<dbReference type="InterPro" id="IPR014729">
    <property type="entry name" value="Rossmann-like_a/b/a_fold"/>
</dbReference>
<dbReference type="InterPro" id="IPR011784">
    <property type="entry name" value="SO4_adenylTrfase_ssu"/>
</dbReference>
<dbReference type="InterPro" id="IPR050128">
    <property type="entry name" value="Sulfate_adenylyltrnsfr_sub2"/>
</dbReference>
<dbReference type="NCBIfam" id="TIGR02039">
    <property type="entry name" value="CysD"/>
    <property type="match status" value="1"/>
</dbReference>
<dbReference type="NCBIfam" id="NF003587">
    <property type="entry name" value="PRK05253.1"/>
    <property type="match status" value="1"/>
</dbReference>
<dbReference type="NCBIfam" id="NF009214">
    <property type="entry name" value="PRK12563.1"/>
    <property type="match status" value="1"/>
</dbReference>
<dbReference type="PANTHER" id="PTHR43196">
    <property type="entry name" value="SULFATE ADENYLYLTRANSFERASE SUBUNIT 2"/>
    <property type="match status" value="1"/>
</dbReference>
<dbReference type="PANTHER" id="PTHR43196:SF1">
    <property type="entry name" value="SULFATE ADENYLYLTRANSFERASE SUBUNIT 2"/>
    <property type="match status" value="1"/>
</dbReference>
<dbReference type="Pfam" id="PF01507">
    <property type="entry name" value="PAPS_reduct"/>
    <property type="match status" value="1"/>
</dbReference>
<dbReference type="PIRSF" id="PIRSF002936">
    <property type="entry name" value="CysDAde_trans"/>
    <property type="match status" value="1"/>
</dbReference>
<dbReference type="SUPFAM" id="SSF52402">
    <property type="entry name" value="Adenine nucleotide alpha hydrolases-like"/>
    <property type="match status" value="1"/>
</dbReference>
<comment type="function">
    <text evidence="1">With CysN forms the ATP sulfurylase (ATPS) that catalyzes the adenylation of sulfate producing adenosine 5'-phosphosulfate (APS) and diphosphate, the first enzymatic step in sulfur assimilation pathway. APS synthesis involves the formation of a high-energy phosphoric-sulfuric acid anhydride bond driven by GTP hydrolysis by CysN coupled to ATP hydrolysis by CysD.</text>
</comment>
<comment type="catalytic activity">
    <reaction evidence="1">
        <text>sulfate + ATP + H(+) = adenosine 5'-phosphosulfate + diphosphate</text>
        <dbReference type="Rhea" id="RHEA:18133"/>
        <dbReference type="ChEBI" id="CHEBI:15378"/>
        <dbReference type="ChEBI" id="CHEBI:16189"/>
        <dbReference type="ChEBI" id="CHEBI:30616"/>
        <dbReference type="ChEBI" id="CHEBI:33019"/>
        <dbReference type="ChEBI" id="CHEBI:58243"/>
        <dbReference type="EC" id="2.7.7.4"/>
    </reaction>
</comment>
<comment type="pathway">
    <text evidence="1">Sulfur metabolism; hydrogen sulfide biosynthesis; sulfite from sulfate: step 1/3.</text>
</comment>
<comment type="subunit">
    <text evidence="1">Heterodimer composed of CysD, the smaller subunit, and CysN.</text>
</comment>
<comment type="similarity">
    <text evidence="1">Belongs to the PAPS reductase family. CysD subfamily.</text>
</comment>
<comment type="sequence caution" evidence="3">
    <conflict type="erroneous initiation">
        <sequence resource="EMBL-CDS" id="CAG21609"/>
    </conflict>
</comment>
<feature type="chain" id="PRO_0000340212" description="Sulfate adenylyltransferase subunit 2">
    <location>
        <begin position="1"/>
        <end position="302"/>
    </location>
</feature>
<feature type="region of interest" description="Disordered" evidence="2">
    <location>
        <begin position="279"/>
        <end position="302"/>
    </location>
</feature>
<feature type="compositionally biased region" description="Basic and acidic residues" evidence="2">
    <location>
        <begin position="280"/>
        <end position="302"/>
    </location>
</feature>
<organism>
    <name type="scientific">Photobacterium profundum (strain SS9)</name>
    <dbReference type="NCBI Taxonomy" id="298386"/>
    <lineage>
        <taxon>Bacteria</taxon>
        <taxon>Pseudomonadati</taxon>
        <taxon>Pseudomonadota</taxon>
        <taxon>Gammaproteobacteria</taxon>
        <taxon>Vibrionales</taxon>
        <taxon>Vibrionaceae</taxon>
        <taxon>Photobacterium</taxon>
    </lineage>
</organism>
<keyword id="KW-0067">ATP-binding</keyword>
<keyword id="KW-0547">Nucleotide-binding</keyword>
<keyword id="KW-0548">Nucleotidyltransferase</keyword>
<keyword id="KW-1185">Reference proteome</keyword>
<keyword id="KW-0808">Transferase</keyword>
<reference key="1">
    <citation type="journal article" date="2005" name="Science">
        <title>Life at depth: Photobacterium profundum genome sequence and expression analysis.</title>
        <authorList>
            <person name="Vezzi A."/>
            <person name="Campanaro S."/>
            <person name="D'Angelo M."/>
            <person name="Simonato F."/>
            <person name="Vitulo N."/>
            <person name="Lauro F.M."/>
            <person name="Cestaro A."/>
            <person name="Malacrida G."/>
            <person name="Simionati B."/>
            <person name="Cannata N."/>
            <person name="Romualdi C."/>
            <person name="Bartlett D.H."/>
            <person name="Valle G."/>
        </authorList>
    </citation>
    <scope>NUCLEOTIDE SEQUENCE [LARGE SCALE GENOMIC DNA]</scope>
    <source>
        <strain>ATCC BAA-1253 / SS9</strain>
    </source>
</reference>
<proteinExistence type="inferred from homology"/>
<name>CYSD_PHOPR</name>
<sequence length="302" mass="34996">MDPKRLTHLKQLEAESIHILREVAAEFDNPVMMYSIGKDSSVMLHLARKAFYPGKIPFPLLHVDTDWKFREMIEFRDRTAEKYGFELLVHKNPEGMAMGISPFEHGSSKHTDVMKTQGLKQALNKYGFDAAFGGARRDEEKSRAKERIYSFRDKNHSWDPKNQRPELWKTYNGQINKGESIRVFPLSNWTELDIWQYIYLESIEIVPLYLSDIRPVVERDGMLIMADDDRLKLQPGEKIEYKSVRFRTLGCYPLTGAIESKADTLPGIIEEMLVATSSERQGRAIDHDQSGSMELKKRQGYF</sequence>
<accession>Q6LM68</accession>